<evidence type="ECO:0000255" key="1">
    <source>
        <dbReference type="HAMAP-Rule" id="MF_00204"/>
    </source>
</evidence>
<protein>
    <recommendedName>
        <fullName evidence="1">UvrABC system protein B</fullName>
        <shortName evidence="1">Protein UvrB</shortName>
    </recommendedName>
    <alternativeName>
        <fullName evidence="1">Excinuclease ABC subunit B</fullName>
    </alternativeName>
</protein>
<dbReference type="EMBL" id="CP000305">
    <property type="protein sequence ID" value="ABG19172.1"/>
    <property type="molecule type" value="Genomic_DNA"/>
</dbReference>
<dbReference type="EMBL" id="ACNQ01000017">
    <property type="protein sequence ID" value="EEO75316.1"/>
    <property type="molecule type" value="Genomic_DNA"/>
</dbReference>
<dbReference type="RefSeq" id="WP_002210767.1">
    <property type="nucleotide sequence ID" value="NZ_ACNQ01000017.1"/>
</dbReference>
<dbReference type="SMR" id="Q1CFQ8"/>
<dbReference type="GeneID" id="57977295"/>
<dbReference type="KEGG" id="ypn:YPN_2845"/>
<dbReference type="HOGENOM" id="CLU_009621_2_1_6"/>
<dbReference type="Proteomes" id="UP000008936">
    <property type="component" value="Chromosome"/>
</dbReference>
<dbReference type="GO" id="GO:0005737">
    <property type="term" value="C:cytoplasm"/>
    <property type="evidence" value="ECO:0007669"/>
    <property type="project" value="UniProtKB-SubCell"/>
</dbReference>
<dbReference type="GO" id="GO:0009380">
    <property type="term" value="C:excinuclease repair complex"/>
    <property type="evidence" value="ECO:0007669"/>
    <property type="project" value="InterPro"/>
</dbReference>
<dbReference type="GO" id="GO:0005524">
    <property type="term" value="F:ATP binding"/>
    <property type="evidence" value="ECO:0007669"/>
    <property type="project" value="UniProtKB-UniRule"/>
</dbReference>
<dbReference type="GO" id="GO:0016887">
    <property type="term" value="F:ATP hydrolysis activity"/>
    <property type="evidence" value="ECO:0007669"/>
    <property type="project" value="InterPro"/>
</dbReference>
<dbReference type="GO" id="GO:0003677">
    <property type="term" value="F:DNA binding"/>
    <property type="evidence" value="ECO:0007669"/>
    <property type="project" value="UniProtKB-UniRule"/>
</dbReference>
<dbReference type="GO" id="GO:0009381">
    <property type="term" value="F:excinuclease ABC activity"/>
    <property type="evidence" value="ECO:0007669"/>
    <property type="project" value="UniProtKB-UniRule"/>
</dbReference>
<dbReference type="GO" id="GO:0004386">
    <property type="term" value="F:helicase activity"/>
    <property type="evidence" value="ECO:0007669"/>
    <property type="project" value="UniProtKB-KW"/>
</dbReference>
<dbReference type="GO" id="GO:0006289">
    <property type="term" value="P:nucleotide-excision repair"/>
    <property type="evidence" value="ECO:0007669"/>
    <property type="project" value="UniProtKB-UniRule"/>
</dbReference>
<dbReference type="GO" id="GO:0009432">
    <property type="term" value="P:SOS response"/>
    <property type="evidence" value="ECO:0007669"/>
    <property type="project" value="UniProtKB-UniRule"/>
</dbReference>
<dbReference type="CDD" id="cd17916">
    <property type="entry name" value="DEXHc_UvrB"/>
    <property type="match status" value="1"/>
</dbReference>
<dbReference type="CDD" id="cd18790">
    <property type="entry name" value="SF2_C_UvrB"/>
    <property type="match status" value="1"/>
</dbReference>
<dbReference type="FunFam" id="3.40.50.300:FF:000257">
    <property type="entry name" value="UvrABC system protein B"/>
    <property type="match status" value="1"/>
</dbReference>
<dbReference type="FunFam" id="3.40.50.300:FF:000401">
    <property type="entry name" value="UvrABC system protein B"/>
    <property type="match status" value="1"/>
</dbReference>
<dbReference type="FunFam" id="3.40.50.300:FF:000477">
    <property type="entry name" value="UvrABC system protein B"/>
    <property type="match status" value="1"/>
</dbReference>
<dbReference type="Gene3D" id="3.40.50.300">
    <property type="entry name" value="P-loop containing nucleotide triphosphate hydrolases"/>
    <property type="match status" value="3"/>
</dbReference>
<dbReference type="Gene3D" id="4.10.860.10">
    <property type="entry name" value="UVR domain"/>
    <property type="match status" value="1"/>
</dbReference>
<dbReference type="HAMAP" id="MF_00204">
    <property type="entry name" value="UvrB"/>
    <property type="match status" value="1"/>
</dbReference>
<dbReference type="InterPro" id="IPR006935">
    <property type="entry name" value="Helicase/UvrB_N"/>
</dbReference>
<dbReference type="InterPro" id="IPR014001">
    <property type="entry name" value="Helicase_ATP-bd"/>
</dbReference>
<dbReference type="InterPro" id="IPR001650">
    <property type="entry name" value="Helicase_C-like"/>
</dbReference>
<dbReference type="InterPro" id="IPR027417">
    <property type="entry name" value="P-loop_NTPase"/>
</dbReference>
<dbReference type="InterPro" id="IPR001943">
    <property type="entry name" value="UVR_dom"/>
</dbReference>
<dbReference type="InterPro" id="IPR036876">
    <property type="entry name" value="UVR_dom_sf"/>
</dbReference>
<dbReference type="InterPro" id="IPR004807">
    <property type="entry name" value="UvrB"/>
</dbReference>
<dbReference type="InterPro" id="IPR041471">
    <property type="entry name" value="UvrB_inter"/>
</dbReference>
<dbReference type="InterPro" id="IPR024759">
    <property type="entry name" value="UvrB_YAD/RRR_dom"/>
</dbReference>
<dbReference type="NCBIfam" id="NF003673">
    <property type="entry name" value="PRK05298.1"/>
    <property type="match status" value="1"/>
</dbReference>
<dbReference type="NCBIfam" id="TIGR00631">
    <property type="entry name" value="uvrb"/>
    <property type="match status" value="1"/>
</dbReference>
<dbReference type="PANTHER" id="PTHR24029">
    <property type="entry name" value="UVRABC SYSTEM PROTEIN B"/>
    <property type="match status" value="1"/>
</dbReference>
<dbReference type="PANTHER" id="PTHR24029:SF0">
    <property type="entry name" value="UVRABC SYSTEM PROTEIN B"/>
    <property type="match status" value="1"/>
</dbReference>
<dbReference type="Pfam" id="PF00271">
    <property type="entry name" value="Helicase_C"/>
    <property type="match status" value="1"/>
</dbReference>
<dbReference type="Pfam" id="PF04851">
    <property type="entry name" value="ResIII"/>
    <property type="match status" value="1"/>
</dbReference>
<dbReference type="Pfam" id="PF02151">
    <property type="entry name" value="UVR"/>
    <property type="match status" value="1"/>
</dbReference>
<dbReference type="Pfam" id="PF12344">
    <property type="entry name" value="UvrB"/>
    <property type="match status" value="1"/>
</dbReference>
<dbReference type="Pfam" id="PF17757">
    <property type="entry name" value="UvrB_inter"/>
    <property type="match status" value="1"/>
</dbReference>
<dbReference type="SMART" id="SM00487">
    <property type="entry name" value="DEXDc"/>
    <property type="match status" value="1"/>
</dbReference>
<dbReference type="SMART" id="SM00490">
    <property type="entry name" value="HELICc"/>
    <property type="match status" value="1"/>
</dbReference>
<dbReference type="SUPFAM" id="SSF46600">
    <property type="entry name" value="C-terminal UvrC-binding domain of UvrB"/>
    <property type="match status" value="1"/>
</dbReference>
<dbReference type="SUPFAM" id="SSF52540">
    <property type="entry name" value="P-loop containing nucleoside triphosphate hydrolases"/>
    <property type="match status" value="2"/>
</dbReference>
<dbReference type="PROSITE" id="PS51192">
    <property type="entry name" value="HELICASE_ATP_BIND_1"/>
    <property type="match status" value="1"/>
</dbReference>
<dbReference type="PROSITE" id="PS51194">
    <property type="entry name" value="HELICASE_CTER"/>
    <property type="match status" value="1"/>
</dbReference>
<dbReference type="PROSITE" id="PS50151">
    <property type="entry name" value="UVR"/>
    <property type="match status" value="1"/>
</dbReference>
<feature type="chain" id="PRO_1000077946" description="UvrABC system protein B">
    <location>
        <begin position="1"/>
        <end position="671"/>
    </location>
</feature>
<feature type="domain" description="Helicase ATP-binding" evidence="1">
    <location>
        <begin position="26"/>
        <end position="183"/>
    </location>
</feature>
<feature type="domain" description="Helicase C-terminal" evidence="1">
    <location>
        <begin position="431"/>
        <end position="593"/>
    </location>
</feature>
<feature type="domain" description="UVR" evidence="1">
    <location>
        <begin position="631"/>
        <end position="666"/>
    </location>
</feature>
<feature type="short sequence motif" description="Beta-hairpin">
    <location>
        <begin position="92"/>
        <end position="115"/>
    </location>
</feature>
<feature type="binding site" evidence="1">
    <location>
        <begin position="39"/>
        <end position="46"/>
    </location>
    <ligand>
        <name>ATP</name>
        <dbReference type="ChEBI" id="CHEBI:30616"/>
    </ligand>
</feature>
<keyword id="KW-0067">ATP-binding</keyword>
<keyword id="KW-0963">Cytoplasm</keyword>
<keyword id="KW-0227">DNA damage</keyword>
<keyword id="KW-0228">DNA excision</keyword>
<keyword id="KW-0234">DNA repair</keyword>
<keyword id="KW-0267">Excision nuclease</keyword>
<keyword id="KW-0347">Helicase</keyword>
<keyword id="KW-0378">Hydrolase</keyword>
<keyword id="KW-0547">Nucleotide-binding</keyword>
<keyword id="KW-0742">SOS response</keyword>
<name>UVRB_YERPN</name>
<accession>Q1CFQ8</accession>
<accession>C4GWL6</accession>
<organism>
    <name type="scientific">Yersinia pestis bv. Antiqua (strain Nepal516)</name>
    <dbReference type="NCBI Taxonomy" id="377628"/>
    <lineage>
        <taxon>Bacteria</taxon>
        <taxon>Pseudomonadati</taxon>
        <taxon>Pseudomonadota</taxon>
        <taxon>Gammaproteobacteria</taxon>
        <taxon>Enterobacterales</taxon>
        <taxon>Yersiniaceae</taxon>
        <taxon>Yersinia</taxon>
    </lineage>
</organism>
<sequence length="671" mass="76345">MSKSFKLHSVFKPAGDQPEAIRKLEEGLENGLAHQTLLGVTGSGKTFTVANVIADLNRPTMILAPNKTLAAQLYGEMKEFFPDNAVEYFVSYYDYYQPEAYVPSSDTFIEKDASVNEHIEQMRLSATKALLERRDVVVVASVSAIYGLGDPDLYLKMMLHLTRGMIIDQRSILRRLSELQYSRNDQVFQRGTFRVRGEVIDIFPAESDEWALRVELFDEEVERLSIFDPLTGQLQHEVPRFTVYPKTHYVTPRERILQAMEEIKVELAERRQVLLANNKLLEEQRLSQRTQFDLEMMNELGYCSGIENYSRYLSGRGPGEAPPTLFDYLPADGLLIVDESHVTIPQIGGMYKGDRSRKETLVEYGFRLPSALDNRPMRFEEFEALAPQTIYVSATPGKYELEKSGGDIIEQVVRPTGLLDPLIEVRPVATQVDDLLSEIRIRAAINERVLVTTLTKRMAEDLTDYLSEHGAKVRYLHSDIDTVERVEIIRDLRLGEFDVLVGINLLREGLDMPEVSLVAILDADKEGFLRSERSLIQTIGRAARNLNGKAILYGDRITASMEKAIGETERRRAKQQAYNEERRIIPQGLNKKIGDILQLGQPSMRGKGKGRGSHKMADTTQYQSLSPKALDQKIRELEAKMYTYAQNLEFEQAAELRDQVHQLRQQFIAIS</sequence>
<reference key="1">
    <citation type="journal article" date="2006" name="J. Bacteriol.">
        <title>Complete genome sequence of Yersinia pestis strains Antiqua and Nepal516: evidence of gene reduction in an emerging pathogen.</title>
        <authorList>
            <person name="Chain P.S.G."/>
            <person name="Hu P."/>
            <person name="Malfatti S.A."/>
            <person name="Radnedge L."/>
            <person name="Larimer F."/>
            <person name="Vergez L.M."/>
            <person name="Worsham P."/>
            <person name="Chu M.C."/>
            <person name="Andersen G.L."/>
        </authorList>
    </citation>
    <scope>NUCLEOTIDE SEQUENCE [LARGE SCALE GENOMIC DNA]</scope>
    <source>
        <strain>Nepal516</strain>
    </source>
</reference>
<reference key="2">
    <citation type="submission" date="2009-04" db="EMBL/GenBank/DDBJ databases">
        <title>Yersinia pestis Nepal516A whole genome shotgun sequencing project.</title>
        <authorList>
            <person name="Plunkett G. III"/>
            <person name="Anderson B.D."/>
            <person name="Baumler D.J."/>
            <person name="Burland V."/>
            <person name="Cabot E.L."/>
            <person name="Glasner J.D."/>
            <person name="Mau B."/>
            <person name="Neeno-Eckwall E."/>
            <person name="Perna N.T."/>
            <person name="Munk A.C."/>
            <person name="Tapia R."/>
            <person name="Green L.D."/>
            <person name="Rogers Y.C."/>
            <person name="Detter J.C."/>
            <person name="Bruce D.C."/>
            <person name="Brettin T.S."/>
        </authorList>
    </citation>
    <scope>NUCLEOTIDE SEQUENCE [LARGE SCALE GENOMIC DNA]</scope>
    <source>
        <strain>Nepal516</strain>
    </source>
</reference>
<proteinExistence type="inferred from homology"/>
<gene>
    <name evidence="1" type="primary">uvrB</name>
    <name type="ordered locus">YPN_2845</name>
    <name type="ORF">YP516_3218</name>
</gene>
<comment type="function">
    <text evidence="1">The UvrABC repair system catalyzes the recognition and processing of DNA lesions. A damage recognition complex composed of 2 UvrA and 2 UvrB subunits scans DNA for abnormalities. Upon binding of the UvrA(2)B(2) complex to a putative damaged site, the DNA wraps around one UvrB monomer. DNA wrap is dependent on ATP binding by UvrB and probably causes local melting of the DNA helix, facilitating insertion of UvrB beta-hairpin between the DNA strands. Then UvrB probes one DNA strand for the presence of a lesion. If a lesion is found the UvrA subunits dissociate and the UvrB-DNA preincision complex is formed. This complex is subsequently bound by UvrC and the second UvrB is released. If no lesion is found, the DNA wraps around the other UvrB subunit that will check the other stand for damage.</text>
</comment>
<comment type="subunit">
    <text evidence="1">Forms a heterotetramer with UvrA during the search for lesions. Interacts with UvrC in an incision complex.</text>
</comment>
<comment type="subcellular location">
    <subcellularLocation>
        <location evidence="1">Cytoplasm</location>
    </subcellularLocation>
</comment>
<comment type="domain">
    <text evidence="1">The beta-hairpin motif is involved in DNA binding.</text>
</comment>
<comment type="similarity">
    <text evidence="1">Belongs to the UvrB family.</text>
</comment>